<reference key="1">
    <citation type="journal article" date="1986" name="Proc. Natl. Acad. Sci. U.S.A.">
        <title>Coding sequence of the precursor of the beta subunit of rat propionyl-CoA carboxylase.</title>
        <authorList>
            <person name="Kraus J.P."/>
            <person name="Firgaira F."/>
            <person name="Novotny J."/>
            <person name="Kalousek F."/>
            <person name="Williams K.R."/>
            <person name="Williamson C."/>
            <person name="Ohura T."/>
            <person name="Rosenberg L.E."/>
        </authorList>
    </citation>
    <scope>NUCLEOTIDE SEQUENCE [MRNA]</scope>
</reference>
<proteinExistence type="evidence at transcript level"/>
<accession>P07633</accession>
<keyword id="KW-0007">Acetylation</keyword>
<keyword id="KW-0067">ATP-binding</keyword>
<keyword id="KW-0436">Ligase</keyword>
<keyword id="KW-0496">Mitochondrion</keyword>
<keyword id="KW-0547">Nucleotide-binding</keyword>
<keyword id="KW-0597">Phosphoprotein</keyword>
<keyword id="KW-1185">Reference proteome</keyword>
<keyword id="KW-0809">Transit peptide</keyword>
<name>PCCB_RAT</name>
<evidence type="ECO:0000250" key="1"/>
<evidence type="ECO:0000250" key="2">
    <source>
        <dbReference type="UniProtKB" id="P05166"/>
    </source>
</evidence>
<evidence type="ECO:0000250" key="3">
    <source>
        <dbReference type="UniProtKB" id="P79384"/>
    </source>
</evidence>
<evidence type="ECO:0000250" key="4">
    <source>
        <dbReference type="UniProtKB" id="Q168G2"/>
    </source>
</evidence>
<evidence type="ECO:0000250" key="5">
    <source>
        <dbReference type="UniProtKB" id="Q99MN9"/>
    </source>
</evidence>
<evidence type="ECO:0000255" key="6"/>
<evidence type="ECO:0000255" key="7">
    <source>
        <dbReference type="PROSITE-ProRule" id="PRU01136"/>
    </source>
</evidence>
<evidence type="ECO:0000255" key="8">
    <source>
        <dbReference type="PROSITE-ProRule" id="PRU01137"/>
    </source>
</evidence>
<evidence type="ECO:0000255" key="9">
    <source>
        <dbReference type="PROSITE-ProRule" id="PRU01138"/>
    </source>
</evidence>
<evidence type="ECO:0000305" key="10"/>
<evidence type="ECO:0000305" key="11">
    <source>
    </source>
</evidence>
<evidence type="ECO:0000312" key="12">
    <source>
        <dbReference type="RGD" id="3265"/>
    </source>
</evidence>
<gene>
    <name evidence="12" type="primary">Pccb</name>
</gene>
<comment type="function">
    <text evidence="2 3 4">This is one of the 2 subunits of the biotin-dependent propionyl-CoA carboxylase (PCC), a mitochondrial enzyme involved in the catabolism of odd chain fatty acids, branched-chain amino acids isoleucine, threonine, methionine, and valine and other metabolites. Propionyl-CoA carboxylase catalyzes the carboxylation of propionyl-CoA/propanoyl-CoA to D-methylmalonyl-CoA/(S)-methylmalonyl-CoA (By similarity). Within the holoenzyme, the alpha subunit catalyzes the ATP-dependent carboxylation of the biotin carried by the biotin carboxyl carrier (BCC) domain, while the beta subunit then transfers the carboxyl group from carboxylated biotin to propionyl-CoA (By similarity). Propionyl-CoA carboxylase also significantly acts on butyryl-CoA/butanoyl-CoA, which is converted to ethylmalonyl-CoA/(2S)-ethylmalonyl-CoA (By similarity). Other alternative minor substrates include (2E)-butenoyl-CoA/crotonoyl-CoA (By similarity).</text>
</comment>
<comment type="catalytic activity">
    <reaction evidence="2">
        <text>propanoyl-CoA + hydrogencarbonate + ATP = (S)-methylmalonyl-CoA + ADP + phosphate + H(+)</text>
        <dbReference type="Rhea" id="RHEA:23720"/>
        <dbReference type="ChEBI" id="CHEBI:15378"/>
        <dbReference type="ChEBI" id="CHEBI:17544"/>
        <dbReference type="ChEBI" id="CHEBI:30616"/>
        <dbReference type="ChEBI" id="CHEBI:43474"/>
        <dbReference type="ChEBI" id="CHEBI:57327"/>
        <dbReference type="ChEBI" id="CHEBI:57392"/>
        <dbReference type="ChEBI" id="CHEBI:456216"/>
        <dbReference type="EC" id="6.4.1.3"/>
    </reaction>
    <physiologicalReaction direction="left-to-right" evidence="2">
        <dbReference type="Rhea" id="RHEA:23721"/>
    </physiologicalReaction>
</comment>
<comment type="catalytic activity">
    <reaction evidence="3">
        <text>butanoyl-CoA + hydrogencarbonate + ATP = (2S)-ethylmalonyl-CoA + ADP + phosphate + H(+)</text>
        <dbReference type="Rhea" id="RHEA:59520"/>
        <dbReference type="ChEBI" id="CHEBI:15378"/>
        <dbReference type="ChEBI" id="CHEBI:17544"/>
        <dbReference type="ChEBI" id="CHEBI:30616"/>
        <dbReference type="ChEBI" id="CHEBI:43474"/>
        <dbReference type="ChEBI" id="CHEBI:57371"/>
        <dbReference type="ChEBI" id="CHEBI:60909"/>
        <dbReference type="ChEBI" id="CHEBI:456216"/>
    </reaction>
    <physiologicalReaction direction="left-to-right" evidence="3">
        <dbReference type="Rhea" id="RHEA:59521"/>
    </physiologicalReaction>
</comment>
<comment type="pathway">
    <text evidence="2">Metabolic intermediate metabolism; propanoyl-CoA degradation; succinyl-CoA from propanoyl-CoA: step 1/3.</text>
</comment>
<comment type="subunit">
    <text evidence="2">The holoenzyme is a dodecamer composed of 6 PCCA/alpha subunits and 6 PCCB/beta subunits.</text>
</comment>
<comment type="subcellular location">
    <subcellularLocation>
        <location evidence="2">Mitochondrion matrix</location>
    </subcellularLocation>
</comment>
<comment type="domain">
    <text evidence="4">The beta subunit contains the carboxyl transferase (CT) domain.</text>
</comment>
<comment type="similarity">
    <text evidence="10">Belongs to the AccD/PCCB family.</text>
</comment>
<dbReference type="EC" id="6.4.1.3" evidence="2"/>
<dbReference type="EMBL" id="M14634">
    <property type="protein sequence ID" value="AAA41818.1"/>
    <property type="molecule type" value="mRNA"/>
</dbReference>
<dbReference type="PIR" id="A25516">
    <property type="entry name" value="A25516"/>
</dbReference>
<dbReference type="SMR" id="P07633"/>
<dbReference type="FunCoup" id="P07633">
    <property type="interactions" value="1306"/>
</dbReference>
<dbReference type="IntAct" id="P07633">
    <property type="interactions" value="1"/>
</dbReference>
<dbReference type="STRING" id="10116.ENSRNOP00000021657"/>
<dbReference type="iPTMnet" id="P07633"/>
<dbReference type="PhosphoSitePlus" id="P07633"/>
<dbReference type="SwissPalm" id="P07633"/>
<dbReference type="PaxDb" id="10116-ENSRNOP00000021657"/>
<dbReference type="UCSC" id="RGD:3265">
    <property type="organism name" value="rat"/>
</dbReference>
<dbReference type="AGR" id="RGD:3265"/>
<dbReference type="RGD" id="3265">
    <property type="gene designation" value="Pccb"/>
</dbReference>
<dbReference type="eggNOG" id="KOG0540">
    <property type="taxonomic scope" value="Eukaryota"/>
</dbReference>
<dbReference type="InParanoid" id="P07633"/>
<dbReference type="PhylomeDB" id="P07633"/>
<dbReference type="BioCyc" id="MetaCyc:MONOMER-8607"/>
<dbReference type="Reactome" id="R-RNO-196780">
    <property type="pathway name" value="Biotin transport and metabolism"/>
</dbReference>
<dbReference type="Reactome" id="R-RNO-71032">
    <property type="pathway name" value="Propionyl-CoA catabolism"/>
</dbReference>
<dbReference type="Reactome" id="R-RNO-9837999">
    <property type="pathway name" value="Mitochondrial protein degradation"/>
</dbReference>
<dbReference type="UniPathway" id="UPA00945">
    <property type="reaction ID" value="UER00908"/>
</dbReference>
<dbReference type="PRO" id="PR:P07633"/>
<dbReference type="Proteomes" id="UP000002494">
    <property type="component" value="Unplaced"/>
</dbReference>
<dbReference type="GO" id="GO:1902494">
    <property type="term" value="C:catalytic complex"/>
    <property type="evidence" value="ECO:0000266"/>
    <property type="project" value="RGD"/>
</dbReference>
<dbReference type="GO" id="GO:0005759">
    <property type="term" value="C:mitochondrial matrix"/>
    <property type="evidence" value="ECO:0000250"/>
    <property type="project" value="UniProtKB"/>
</dbReference>
<dbReference type="GO" id="GO:0005739">
    <property type="term" value="C:mitochondrion"/>
    <property type="evidence" value="ECO:0000318"/>
    <property type="project" value="GO_Central"/>
</dbReference>
<dbReference type="GO" id="GO:0005524">
    <property type="term" value="F:ATP binding"/>
    <property type="evidence" value="ECO:0007669"/>
    <property type="project" value="UniProtKB-KW"/>
</dbReference>
<dbReference type="GO" id="GO:0004658">
    <property type="term" value="F:propionyl-CoA carboxylase activity"/>
    <property type="evidence" value="ECO:0000250"/>
    <property type="project" value="UniProtKB"/>
</dbReference>
<dbReference type="GO" id="GO:0009063">
    <property type="term" value="P:amino acid catabolic process"/>
    <property type="evidence" value="ECO:0000304"/>
    <property type="project" value="RGD"/>
</dbReference>
<dbReference type="GO" id="GO:0009062">
    <property type="term" value="P:fatty acid catabolic process"/>
    <property type="evidence" value="ECO:0000304"/>
    <property type="project" value="RGD"/>
</dbReference>
<dbReference type="FunFam" id="3.90.226.10:FF:000017">
    <property type="entry name" value="Propionyl-CoA carboxylase subunit beta 5"/>
    <property type="match status" value="1"/>
</dbReference>
<dbReference type="FunFam" id="3.90.226.10:FF:000016">
    <property type="entry name" value="Propionyl-CoA carboxylase, beta subunit"/>
    <property type="match status" value="1"/>
</dbReference>
<dbReference type="Gene3D" id="3.90.226.10">
    <property type="entry name" value="2-enoyl-CoA Hydratase, Chain A, domain 1"/>
    <property type="match status" value="2"/>
</dbReference>
<dbReference type="InterPro" id="IPR051047">
    <property type="entry name" value="AccD/PCCB"/>
</dbReference>
<dbReference type="InterPro" id="IPR034733">
    <property type="entry name" value="AcCoA_carboxyl_beta"/>
</dbReference>
<dbReference type="InterPro" id="IPR029045">
    <property type="entry name" value="ClpP/crotonase-like_dom_sf"/>
</dbReference>
<dbReference type="InterPro" id="IPR011763">
    <property type="entry name" value="COA_CT_C"/>
</dbReference>
<dbReference type="InterPro" id="IPR011762">
    <property type="entry name" value="COA_CT_N"/>
</dbReference>
<dbReference type="PANTHER" id="PTHR43842">
    <property type="entry name" value="PROPIONYL-COA CARBOXYLASE BETA CHAIN"/>
    <property type="match status" value="1"/>
</dbReference>
<dbReference type="PANTHER" id="PTHR43842:SF2">
    <property type="entry name" value="PROPIONYL-COA CARBOXYLASE BETA CHAIN, MITOCHONDRIAL"/>
    <property type="match status" value="1"/>
</dbReference>
<dbReference type="Pfam" id="PF01039">
    <property type="entry name" value="Carboxyl_trans"/>
    <property type="match status" value="1"/>
</dbReference>
<dbReference type="SUPFAM" id="SSF52096">
    <property type="entry name" value="ClpP/crotonase"/>
    <property type="match status" value="2"/>
</dbReference>
<dbReference type="PROSITE" id="PS50989">
    <property type="entry name" value="COA_CT_CTER"/>
    <property type="match status" value="1"/>
</dbReference>
<dbReference type="PROSITE" id="PS50980">
    <property type="entry name" value="COA_CT_NTER"/>
    <property type="match status" value="1"/>
</dbReference>
<sequence length="541" mass="58626">MAAVIRIRAMAAGTRLRVLNCGLGTTIRSLCSQPVSVNERIENKRHAALLGGGQRRIDAQHKRGKLTARERISLLLDPGSFLESDMFVEHRCADFGMAAEKNKFPGDSVVTGRGRINGRLVYVFSQDFTVFGGSLSGAHAQKICKIMDQAITVGAPVIGLNDSGGARIQEGVESLAGYADIFLRNVTASGVIPQISLIMGPCAGGAVYSPALTDFTFMVKDTSYLFITGPEFVKSVTNEDVTQEQLGGAKTHTTVSGVAHRAFDNDVDALCNLREFLNFLPLSNQDPASIRECHDPSDRLVPELDTVVPLESSKAYNMLDIIHAVIDEREFFEIMPNYAKNIVIGFARMNGRTVGIVGNQPNVASGCLDINSSVKGARFVRFCDAFSIPLITFVDVPGFLPGTAQEYGGIIRHGAKLLYAFAEATVPKITVITRKAYGGAYDVMSSKHLLGDTNYAWPTAEIAVMGAKGAVEIIFKGHEDVEAAQAEYVEKFANPFPAAVRGFVDDIIQPSSTRARICCDLEVLASKKVHRPWRKHANVPL</sequence>
<protein>
    <recommendedName>
        <fullName evidence="11">Propionyl-CoA carboxylase beta chain, mitochondrial</fullName>
        <shortName>PCCase subunit beta</shortName>
        <ecNumber evidence="2">6.4.1.3</ecNumber>
    </recommendedName>
    <alternativeName>
        <fullName>Propanoyl-CoA:carbon dioxide ligase subunit beta</fullName>
    </alternativeName>
</protein>
<feature type="transit peptide" description="Mitochondrion" evidence="1">
    <location>
        <begin position="1"/>
        <end position="28"/>
    </location>
</feature>
<feature type="chain" id="PRO_0000000296" description="Propionyl-CoA carboxylase beta chain, mitochondrial">
    <location>
        <begin position="29"/>
        <end position="541"/>
    </location>
</feature>
<feature type="domain" description="CoA carboxyltransferase N-terminal" evidence="7">
    <location>
        <begin position="34"/>
        <end position="292"/>
    </location>
</feature>
<feature type="domain" description="CoA carboxyltransferase C-terminal" evidence="8">
    <location>
        <begin position="296"/>
        <end position="535"/>
    </location>
</feature>
<feature type="region of interest" description="Carboxyltransferase" evidence="9">
    <location>
        <begin position="34"/>
        <end position="535"/>
    </location>
</feature>
<feature type="region of interest" description="Acyl-CoA binding" evidence="6">
    <location>
        <begin position="327"/>
        <end position="360"/>
    </location>
</feature>
<feature type="modified residue" description="Phosphoserine" evidence="2">
    <location>
        <position position="73"/>
    </location>
</feature>
<feature type="modified residue" description="N6-acetyllysine; alternate" evidence="5">
    <location>
        <position position="101"/>
    </location>
</feature>
<feature type="modified residue" description="N6-succinyllysine; alternate" evidence="5">
    <location>
        <position position="101"/>
    </location>
</feature>
<feature type="modified residue" description="N6-succinyllysine" evidence="5">
    <location>
        <position position="250"/>
    </location>
</feature>
<feature type="modified residue" description="N6-acetyllysine; alternate" evidence="5">
    <location>
        <position position="476"/>
    </location>
</feature>
<feature type="modified residue" description="N6-succinyllysine; alternate" evidence="5">
    <location>
        <position position="476"/>
    </location>
</feature>
<feature type="modified residue" description="N6-acetyllysine; alternate" evidence="5">
    <location>
        <position position="491"/>
    </location>
</feature>
<feature type="modified residue" description="N6-succinyllysine; alternate" evidence="5">
    <location>
        <position position="491"/>
    </location>
</feature>
<organism>
    <name type="scientific">Rattus norvegicus</name>
    <name type="common">Rat</name>
    <dbReference type="NCBI Taxonomy" id="10116"/>
    <lineage>
        <taxon>Eukaryota</taxon>
        <taxon>Metazoa</taxon>
        <taxon>Chordata</taxon>
        <taxon>Craniata</taxon>
        <taxon>Vertebrata</taxon>
        <taxon>Euteleostomi</taxon>
        <taxon>Mammalia</taxon>
        <taxon>Eutheria</taxon>
        <taxon>Euarchontoglires</taxon>
        <taxon>Glires</taxon>
        <taxon>Rodentia</taxon>
        <taxon>Myomorpha</taxon>
        <taxon>Muroidea</taxon>
        <taxon>Muridae</taxon>
        <taxon>Murinae</taxon>
        <taxon>Rattus</taxon>
    </lineage>
</organism>